<name>FABZ_DESRM</name>
<dbReference type="EC" id="4.2.1.59" evidence="1"/>
<dbReference type="EMBL" id="CP000612">
    <property type="protein sequence ID" value="ABO51605.1"/>
    <property type="molecule type" value="Genomic_DNA"/>
</dbReference>
<dbReference type="RefSeq" id="WP_011879394.1">
    <property type="nucleotide sequence ID" value="NC_009253.1"/>
</dbReference>
<dbReference type="SMR" id="A4J952"/>
<dbReference type="STRING" id="349161.Dred_3103"/>
<dbReference type="KEGG" id="drm:Dred_3103"/>
<dbReference type="eggNOG" id="COG0764">
    <property type="taxonomic scope" value="Bacteria"/>
</dbReference>
<dbReference type="HOGENOM" id="CLU_078912_3_0_9"/>
<dbReference type="OrthoDB" id="9772788at2"/>
<dbReference type="Proteomes" id="UP000001556">
    <property type="component" value="Chromosome"/>
</dbReference>
<dbReference type="GO" id="GO:0005737">
    <property type="term" value="C:cytoplasm"/>
    <property type="evidence" value="ECO:0007669"/>
    <property type="project" value="UniProtKB-SubCell"/>
</dbReference>
<dbReference type="GO" id="GO:0016020">
    <property type="term" value="C:membrane"/>
    <property type="evidence" value="ECO:0007669"/>
    <property type="project" value="GOC"/>
</dbReference>
<dbReference type="GO" id="GO:0019171">
    <property type="term" value="F:(3R)-hydroxyacyl-[acyl-carrier-protein] dehydratase activity"/>
    <property type="evidence" value="ECO:0007669"/>
    <property type="project" value="UniProtKB-EC"/>
</dbReference>
<dbReference type="GO" id="GO:0006633">
    <property type="term" value="P:fatty acid biosynthetic process"/>
    <property type="evidence" value="ECO:0007669"/>
    <property type="project" value="UniProtKB-UniRule"/>
</dbReference>
<dbReference type="GO" id="GO:0009245">
    <property type="term" value="P:lipid A biosynthetic process"/>
    <property type="evidence" value="ECO:0007669"/>
    <property type="project" value="UniProtKB-UniRule"/>
</dbReference>
<dbReference type="CDD" id="cd01288">
    <property type="entry name" value="FabZ"/>
    <property type="match status" value="1"/>
</dbReference>
<dbReference type="FunFam" id="3.10.129.10:FF:000001">
    <property type="entry name" value="3-hydroxyacyl-[acyl-carrier-protein] dehydratase FabZ"/>
    <property type="match status" value="1"/>
</dbReference>
<dbReference type="Gene3D" id="3.10.129.10">
    <property type="entry name" value="Hotdog Thioesterase"/>
    <property type="match status" value="1"/>
</dbReference>
<dbReference type="HAMAP" id="MF_00406">
    <property type="entry name" value="FabZ"/>
    <property type="match status" value="1"/>
</dbReference>
<dbReference type="InterPro" id="IPR013114">
    <property type="entry name" value="FabA_FabZ"/>
</dbReference>
<dbReference type="InterPro" id="IPR010084">
    <property type="entry name" value="FabZ"/>
</dbReference>
<dbReference type="InterPro" id="IPR029069">
    <property type="entry name" value="HotDog_dom_sf"/>
</dbReference>
<dbReference type="NCBIfam" id="TIGR01750">
    <property type="entry name" value="fabZ"/>
    <property type="match status" value="1"/>
</dbReference>
<dbReference type="NCBIfam" id="NF000582">
    <property type="entry name" value="PRK00006.1"/>
    <property type="match status" value="1"/>
</dbReference>
<dbReference type="PANTHER" id="PTHR30272">
    <property type="entry name" value="3-HYDROXYACYL-[ACYL-CARRIER-PROTEIN] DEHYDRATASE"/>
    <property type="match status" value="1"/>
</dbReference>
<dbReference type="PANTHER" id="PTHR30272:SF1">
    <property type="entry name" value="3-HYDROXYACYL-[ACYL-CARRIER-PROTEIN] DEHYDRATASE"/>
    <property type="match status" value="1"/>
</dbReference>
<dbReference type="Pfam" id="PF07977">
    <property type="entry name" value="FabA"/>
    <property type="match status" value="1"/>
</dbReference>
<dbReference type="SUPFAM" id="SSF54637">
    <property type="entry name" value="Thioesterase/thiol ester dehydrase-isomerase"/>
    <property type="match status" value="1"/>
</dbReference>
<reference key="1">
    <citation type="submission" date="2007-03" db="EMBL/GenBank/DDBJ databases">
        <title>Complete sequence of Desulfotomaculum reducens MI-1.</title>
        <authorList>
            <consortium name="US DOE Joint Genome Institute"/>
            <person name="Copeland A."/>
            <person name="Lucas S."/>
            <person name="Lapidus A."/>
            <person name="Barry K."/>
            <person name="Detter J.C."/>
            <person name="Glavina del Rio T."/>
            <person name="Hammon N."/>
            <person name="Israni S."/>
            <person name="Dalin E."/>
            <person name="Tice H."/>
            <person name="Pitluck S."/>
            <person name="Sims D."/>
            <person name="Brettin T."/>
            <person name="Bruce D."/>
            <person name="Han C."/>
            <person name="Tapia R."/>
            <person name="Schmutz J."/>
            <person name="Larimer F."/>
            <person name="Land M."/>
            <person name="Hauser L."/>
            <person name="Kyrpides N."/>
            <person name="Kim E."/>
            <person name="Tebo B.M."/>
            <person name="Richardson P."/>
        </authorList>
    </citation>
    <scope>NUCLEOTIDE SEQUENCE [LARGE SCALE GENOMIC DNA]</scope>
    <source>
        <strain>ATCC BAA-1160 / DSM 100696 / MI-1</strain>
    </source>
</reference>
<accession>A4J952</accession>
<gene>
    <name evidence="1" type="primary">fabZ</name>
    <name type="ordered locus">Dred_3103</name>
</gene>
<sequence length="142" mass="15606">MLDINAIQQILPHRYPFLLVDRILEMEEGKRVVGIKNVTANEPFFPGHFPGYPVMPGVLVIEAMAQVGAVAILSMPAYAGRIALFAGIDKARFRRQVVPGDTLRIEVEVLKLRGTIGKSMARAYVGEELAAEAELMFAIGQK</sequence>
<feature type="chain" id="PRO_1000205940" description="3-hydroxyacyl-[acyl-carrier-protein] dehydratase FabZ">
    <location>
        <begin position="1"/>
        <end position="142"/>
    </location>
</feature>
<feature type="active site" evidence="1">
    <location>
        <position position="48"/>
    </location>
</feature>
<organism>
    <name type="scientific">Desulforamulus reducens (strain ATCC BAA-1160 / DSM 100696 / MI-1)</name>
    <name type="common">Desulfotomaculum reducens</name>
    <dbReference type="NCBI Taxonomy" id="349161"/>
    <lineage>
        <taxon>Bacteria</taxon>
        <taxon>Bacillati</taxon>
        <taxon>Bacillota</taxon>
        <taxon>Clostridia</taxon>
        <taxon>Eubacteriales</taxon>
        <taxon>Peptococcaceae</taxon>
        <taxon>Desulforamulus</taxon>
    </lineage>
</organism>
<comment type="function">
    <text evidence="1">Involved in unsaturated fatty acids biosynthesis. Catalyzes the dehydration of short chain beta-hydroxyacyl-ACPs and long chain saturated and unsaturated beta-hydroxyacyl-ACPs.</text>
</comment>
<comment type="catalytic activity">
    <reaction evidence="1">
        <text>a (3R)-hydroxyacyl-[ACP] = a (2E)-enoyl-[ACP] + H2O</text>
        <dbReference type="Rhea" id="RHEA:13097"/>
        <dbReference type="Rhea" id="RHEA-COMP:9925"/>
        <dbReference type="Rhea" id="RHEA-COMP:9945"/>
        <dbReference type="ChEBI" id="CHEBI:15377"/>
        <dbReference type="ChEBI" id="CHEBI:78784"/>
        <dbReference type="ChEBI" id="CHEBI:78827"/>
        <dbReference type="EC" id="4.2.1.59"/>
    </reaction>
</comment>
<comment type="subcellular location">
    <subcellularLocation>
        <location evidence="1">Cytoplasm</location>
    </subcellularLocation>
</comment>
<comment type="similarity">
    <text evidence="1">Belongs to the thioester dehydratase family. FabZ subfamily.</text>
</comment>
<keyword id="KW-0963">Cytoplasm</keyword>
<keyword id="KW-0441">Lipid A biosynthesis</keyword>
<keyword id="KW-0444">Lipid biosynthesis</keyword>
<keyword id="KW-0443">Lipid metabolism</keyword>
<keyword id="KW-0456">Lyase</keyword>
<keyword id="KW-1185">Reference proteome</keyword>
<protein>
    <recommendedName>
        <fullName evidence="1">3-hydroxyacyl-[acyl-carrier-protein] dehydratase FabZ</fullName>
        <ecNumber evidence="1">4.2.1.59</ecNumber>
    </recommendedName>
    <alternativeName>
        <fullName evidence="1">(3R)-hydroxymyristoyl-[acyl-carrier-protein] dehydratase</fullName>
        <shortName evidence="1">(3R)-hydroxymyristoyl-ACP dehydrase</shortName>
    </alternativeName>
    <alternativeName>
        <fullName evidence="1">Beta-hydroxyacyl-ACP dehydratase</fullName>
    </alternativeName>
</protein>
<evidence type="ECO:0000255" key="1">
    <source>
        <dbReference type="HAMAP-Rule" id="MF_00406"/>
    </source>
</evidence>
<proteinExistence type="inferred from homology"/>